<keyword id="KW-0030">Aminoacyl-tRNA synthetase</keyword>
<keyword id="KW-0067">ATP-binding</keyword>
<keyword id="KW-0963">Cytoplasm</keyword>
<keyword id="KW-0436">Ligase</keyword>
<keyword id="KW-0479">Metal-binding</keyword>
<keyword id="KW-0547">Nucleotide-binding</keyword>
<keyword id="KW-0648">Protein biosynthesis</keyword>
<keyword id="KW-0694">RNA-binding</keyword>
<keyword id="KW-0820">tRNA-binding</keyword>
<keyword id="KW-0862">Zinc</keyword>
<protein>
    <recommendedName>
        <fullName evidence="1">Alanine--tRNA ligase</fullName>
        <ecNumber evidence="1">6.1.1.7</ecNumber>
    </recommendedName>
    <alternativeName>
        <fullName evidence="1">Alanyl-tRNA synthetase</fullName>
        <shortName evidence="1">AlaRS</shortName>
    </alternativeName>
</protein>
<accession>B0BVK9</accession>
<feature type="chain" id="PRO_0000347765" description="Alanine--tRNA ligase">
    <location>
        <begin position="1"/>
        <end position="877"/>
    </location>
</feature>
<feature type="binding site" evidence="1">
    <location>
        <position position="567"/>
    </location>
    <ligand>
        <name>Zn(2+)</name>
        <dbReference type="ChEBI" id="CHEBI:29105"/>
    </ligand>
</feature>
<feature type="binding site" evidence="1">
    <location>
        <position position="571"/>
    </location>
    <ligand>
        <name>Zn(2+)</name>
        <dbReference type="ChEBI" id="CHEBI:29105"/>
    </ligand>
</feature>
<feature type="binding site" evidence="1">
    <location>
        <position position="669"/>
    </location>
    <ligand>
        <name>Zn(2+)</name>
        <dbReference type="ChEBI" id="CHEBI:29105"/>
    </ligand>
</feature>
<feature type="binding site" evidence="1">
    <location>
        <position position="673"/>
    </location>
    <ligand>
        <name>Zn(2+)</name>
        <dbReference type="ChEBI" id="CHEBI:29105"/>
    </ligand>
</feature>
<name>SYA_RICRO</name>
<proteinExistence type="inferred from homology"/>
<sequence length="877" mass="98632">MTKFTTEEVRSKFITYFKANNHTHVPASSLIPHNDPSLMFVNSGMVQFKNVFTGQGKRPYNKAVTSQKSLRAGGKHNDLENVGYTARHHTFFEMLGNFSFGDYFKEQAIYYAWNLLTKEFELPKDKLYATIYHTDDEAAAYWKKIAGFGDDRIIKIKTNDNFWSMGDTGPCGPCSEIFYDHGEQIYGGLPGTKDEDGDRFIEIWNMVFMQYEQIDKDTSIELSQKSIDTGMGLERMTAVLQHVNNNYDIDLFQEIINFTENIVKVKAEGEAKFSYRVIADHLRASSFLIADGVIPSNEGRGYVLRRIMRRSMRHAHMLGSKEPLMYKLLPKLVDLMGNVYPELKRAESFISSILEQEEIRFKATLERGLKLLTEETETLTKGNKLSGEVAFKLYDTYGFPLDLTEDILKNRDIAVDHKGFEEQMLMQKELARKSWLGSGESKTNQLWFDIKEQHGSTEFLGYTLNEAKCKIIALIKNNNLVNDIKEIDTQFLLISNQTPFYGESGGQIGDIGTISAKDSEVEVIDTLKYLGSIIVHKCILKKGQINVGENANFSIDIRYRQNLRIHHSATHILHAVLHEVLGKHVTQKGSLVAPTYLRFDISHSKAVTNEEITLIEDKVNEIIRDNHEVTTTLMATEDAIKQGAMALFGEKYDSEVRVVKMGETSLELCGGTHVRRTGDIGCFKITSESAIAAGVRRIEAVCGEFVITLMRENDSLLKSIESSFKTNKNELITKVNNILERNKEVEKELEKTLLASLDLSIEQIEKQAAQITGIKLLYKKVGNIDNKILRQAAENLTKKVEDLIMVYIAEGIGKLSITVAVSKAITDKYNADIIAKKLSLFLGGSGGGGQASLAQAGGNDIGKLTNIHEKLYSLLTV</sequence>
<organism>
    <name type="scientific">Rickettsia rickettsii (strain Iowa)</name>
    <dbReference type="NCBI Taxonomy" id="452659"/>
    <lineage>
        <taxon>Bacteria</taxon>
        <taxon>Pseudomonadati</taxon>
        <taxon>Pseudomonadota</taxon>
        <taxon>Alphaproteobacteria</taxon>
        <taxon>Rickettsiales</taxon>
        <taxon>Rickettsiaceae</taxon>
        <taxon>Rickettsieae</taxon>
        <taxon>Rickettsia</taxon>
        <taxon>spotted fever group</taxon>
    </lineage>
</organism>
<evidence type="ECO:0000255" key="1">
    <source>
        <dbReference type="HAMAP-Rule" id="MF_00036"/>
    </source>
</evidence>
<dbReference type="EC" id="6.1.1.7" evidence="1"/>
<dbReference type="EMBL" id="CP000766">
    <property type="protein sequence ID" value="ABY73269.1"/>
    <property type="molecule type" value="Genomic_DNA"/>
</dbReference>
<dbReference type="RefSeq" id="WP_012151430.1">
    <property type="nucleotide sequence ID" value="NC_010263.3"/>
</dbReference>
<dbReference type="SMR" id="B0BVK9"/>
<dbReference type="GeneID" id="79937924"/>
<dbReference type="KEGG" id="rrj:RrIowa_1552"/>
<dbReference type="eggNOG" id="COG0013">
    <property type="taxonomic scope" value="Bacteria"/>
</dbReference>
<dbReference type="HOGENOM" id="CLU_004485_1_1_5"/>
<dbReference type="Proteomes" id="UP000000796">
    <property type="component" value="Chromosome"/>
</dbReference>
<dbReference type="GO" id="GO:0005829">
    <property type="term" value="C:cytosol"/>
    <property type="evidence" value="ECO:0007669"/>
    <property type="project" value="TreeGrafter"/>
</dbReference>
<dbReference type="GO" id="GO:0004813">
    <property type="term" value="F:alanine-tRNA ligase activity"/>
    <property type="evidence" value="ECO:0007669"/>
    <property type="project" value="UniProtKB-UniRule"/>
</dbReference>
<dbReference type="GO" id="GO:0002161">
    <property type="term" value="F:aminoacyl-tRNA deacylase activity"/>
    <property type="evidence" value="ECO:0007669"/>
    <property type="project" value="TreeGrafter"/>
</dbReference>
<dbReference type="GO" id="GO:0005524">
    <property type="term" value="F:ATP binding"/>
    <property type="evidence" value="ECO:0007669"/>
    <property type="project" value="UniProtKB-UniRule"/>
</dbReference>
<dbReference type="GO" id="GO:0000049">
    <property type="term" value="F:tRNA binding"/>
    <property type="evidence" value="ECO:0007669"/>
    <property type="project" value="UniProtKB-KW"/>
</dbReference>
<dbReference type="GO" id="GO:0008270">
    <property type="term" value="F:zinc ion binding"/>
    <property type="evidence" value="ECO:0007669"/>
    <property type="project" value="UniProtKB-UniRule"/>
</dbReference>
<dbReference type="GO" id="GO:0006419">
    <property type="term" value="P:alanyl-tRNA aminoacylation"/>
    <property type="evidence" value="ECO:0007669"/>
    <property type="project" value="UniProtKB-UniRule"/>
</dbReference>
<dbReference type="GO" id="GO:0045892">
    <property type="term" value="P:negative regulation of DNA-templated transcription"/>
    <property type="evidence" value="ECO:0007669"/>
    <property type="project" value="TreeGrafter"/>
</dbReference>
<dbReference type="CDD" id="cd00673">
    <property type="entry name" value="AlaRS_core"/>
    <property type="match status" value="1"/>
</dbReference>
<dbReference type="FunFam" id="3.10.310.40:FF:000001">
    <property type="entry name" value="Alanine--tRNA ligase"/>
    <property type="match status" value="1"/>
</dbReference>
<dbReference type="FunFam" id="3.30.54.20:FF:000001">
    <property type="entry name" value="Alanine--tRNA ligase"/>
    <property type="match status" value="1"/>
</dbReference>
<dbReference type="FunFam" id="3.30.930.10:FF:000004">
    <property type="entry name" value="Alanine--tRNA ligase"/>
    <property type="match status" value="1"/>
</dbReference>
<dbReference type="FunFam" id="3.30.980.10:FF:000004">
    <property type="entry name" value="Alanine--tRNA ligase, cytoplasmic"/>
    <property type="match status" value="1"/>
</dbReference>
<dbReference type="Gene3D" id="2.40.30.130">
    <property type="match status" value="1"/>
</dbReference>
<dbReference type="Gene3D" id="3.10.310.40">
    <property type="match status" value="1"/>
</dbReference>
<dbReference type="Gene3D" id="3.30.54.20">
    <property type="match status" value="1"/>
</dbReference>
<dbReference type="Gene3D" id="3.30.930.10">
    <property type="entry name" value="Bira Bifunctional Protein, Domain 2"/>
    <property type="match status" value="1"/>
</dbReference>
<dbReference type="Gene3D" id="3.30.980.10">
    <property type="entry name" value="Threonyl-trna Synthetase, Chain A, domain 2"/>
    <property type="match status" value="1"/>
</dbReference>
<dbReference type="HAMAP" id="MF_00036_B">
    <property type="entry name" value="Ala_tRNA_synth_B"/>
    <property type="match status" value="1"/>
</dbReference>
<dbReference type="InterPro" id="IPR045864">
    <property type="entry name" value="aa-tRNA-synth_II/BPL/LPL"/>
</dbReference>
<dbReference type="InterPro" id="IPR002318">
    <property type="entry name" value="Ala-tRNA-lgiase_IIc"/>
</dbReference>
<dbReference type="InterPro" id="IPR018162">
    <property type="entry name" value="Ala-tRNA-ligase_IIc_anticod-bd"/>
</dbReference>
<dbReference type="InterPro" id="IPR018165">
    <property type="entry name" value="Ala-tRNA-synth_IIc_core"/>
</dbReference>
<dbReference type="InterPro" id="IPR018164">
    <property type="entry name" value="Ala-tRNA-synth_IIc_N"/>
</dbReference>
<dbReference type="InterPro" id="IPR050058">
    <property type="entry name" value="Ala-tRNA_ligase"/>
</dbReference>
<dbReference type="InterPro" id="IPR023033">
    <property type="entry name" value="Ala_tRNA_ligase_euk/bac"/>
</dbReference>
<dbReference type="InterPro" id="IPR003156">
    <property type="entry name" value="DHHA1_dom"/>
</dbReference>
<dbReference type="InterPro" id="IPR018163">
    <property type="entry name" value="Thr/Ala-tRNA-synth_IIc_edit"/>
</dbReference>
<dbReference type="InterPro" id="IPR009000">
    <property type="entry name" value="Transl_B-barrel_sf"/>
</dbReference>
<dbReference type="InterPro" id="IPR012947">
    <property type="entry name" value="tRNA_SAD"/>
</dbReference>
<dbReference type="NCBIfam" id="TIGR00344">
    <property type="entry name" value="alaS"/>
    <property type="match status" value="1"/>
</dbReference>
<dbReference type="PANTHER" id="PTHR11777:SF9">
    <property type="entry name" value="ALANINE--TRNA LIGASE, CYTOPLASMIC"/>
    <property type="match status" value="1"/>
</dbReference>
<dbReference type="PANTHER" id="PTHR11777">
    <property type="entry name" value="ALANYL-TRNA SYNTHETASE"/>
    <property type="match status" value="1"/>
</dbReference>
<dbReference type="Pfam" id="PF02272">
    <property type="entry name" value="DHHA1"/>
    <property type="match status" value="1"/>
</dbReference>
<dbReference type="Pfam" id="PF01411">
    <property type="entry name" value="tRNA-synt_2c"/>
    <property type="match status" value="1"/>
</dbReference>
<dbReference type="Pfam" id="PF07973">
    <property type="entry name" value="tRNA_SAD"/>
    <property type="match status" value="1"/>
</dbReference>
<dbReference type="PRINTS" id="PR00980">
    <property type="entry name" value="TRNASYNTHALA"/>
</dbReference>
<dbReference type="SMART" id="SM00863">
    <property type="entry name" value="tRNA_SAD"/>
    <property type="match status" value="1"/>
</dbReference>
<dbReference type="SUPFAM" id="SSF55681">
    <property type="entry name" value="Class II aaRS and biotin synthetases"/>
    <property type="match status" value="1"/>
</dbReference>
<dbReference type="SUPFAM" id="SSF101353">
    <property type="entry name" value="Putative anticodon-binding domain of alanyl-tRNA synthetase (AlaRS)"/>
    <property type="match status" value="1"/>
</dbReference>
<dbReference type="SUPFAM" id="SSF55186">
    <property type="entry name" value="ThrRS/AlaRS common domain"/>
    <property type="match status" value="1"/>
</dbReference>
<dbReference type="SUPFAM" id="SSF50447">
    <property type="entry name" value="Translation proteins"/>
    <property type="match status" value="1"/>
</dbReference>
<dbReference type="PROSITE" id="PS50860">
    <property type="entry name" value="AA_TRNA_LIGASE_II_ALA"/>
    <property type="match status" value="1"/>
</dbReference>
<reference key="1">
    <citation type="journal article" date="2008" name="Infect. Immun.">
        <title>Genomic comparison of virulent Rickettsia rickettsii Sheila Smith and avirulent Rickettsia rickettsii Iowa.</title>
        <authorList>
            <person name="Ellison D.W."/>
            <person name="Clark T.R."/>
            <person name="Sturdevant D.E."/>
            <person name="Virtaneva K."/>
            <person name="Porcella S.F."/>
            <person name="Hackstadt T."/>
        </authorList>
    </citation>
    <scope>NUCLEOTIDE SEQUENCE [LARGE SCALE GENOMIC DNA]</scope>
    <source>
        <strain>Iowa</strain>
    </source>
</reference>
<gene>
    <name evidence="1" type="primary">alaS</name>
    <name type="ordered locus">RrIowa_1552</name>
</gene>
<comment type="function">
    <text evidence="1">Catalyzes the attachment of alanine to tRNA(Ala) in a two-step reaction: alanine is first activated by ATP to form Ala-AMP and then transferred to the acceptor end of tRNA(Ala). Also edits incorrectly charged Ser-tRNA(Ala) and Gly-tRNA(Ala) via its editing domain.</text>
</comment>
<comment type="catalytic activity">
    <reaction evidence="1">
        <text>tRNA(Ala) + L-alanine + ATP = L-alanyl-tRNA(Ala) + AMP + diphosphate</text>
        <dbReference type="Rhea" id="RHEA:12540"/>
        <dbReference type="Rhea" id="RHEA-COMP:9657"/>
        <dbReference type="Rhea" id="RHEA-COMP:9923"/>
        <dbReference type="ChEBI" id="CHEBI:30616"/>
        <dbReference type="ChEBI" id="CHEBI:33019"/>
        <dbReference type="ChEBI" id="CHEBI:57972"/>
        <dbReference type="ChEBI" id="CHEBI:78442"/>
        <dbReference type="ChEBI" id="CHEBI:78497"/>
        <dbReference type="ChEBI" id="CHEBI:456215"/>
        <dbReference type="EC" id="6.1.1.7"/>
    </reaction>
</comment>
<comment type="cofactor">
    <cofactor evidence="1">
        <name>Zn(2+)</name>
        <dbReference type="ChEBI" id="CHEBI:29105"/>
    </cofactor>
    <text evidence="1">Binds 1 zinc ion per subunit.</text>
</comment>
<comment type="subcellular location">
    <subcellularLocation>
        <location evidence="1">Cytoplasm</location>
    </subcellularLocation>
</comment>
<comment type="domain">
    <text evidence="1">Consists of three domains; the N-terminal catalytic domain, the editing domain and the C-terminal C-Ala domain. The editing domain removes incorrectly charged amino acids, while the C-Ala domain, along with tRNA(Ala), serves as a bridge to cooperatively bring together the editing and aminoacylation centers thus stimulating deacylation of misacylated tRNAs.</text>
</comment>
<comment type="similarity">
    <text evidence="1">Belongs to the class-II aminoacyl-tRNA synthetase family.</text>
</comment>